<sequence length="1285" mass="145982">MAALCEEEQVFLEPEDISLKIVETDSDSGQGSCEMADQNKLLGCVEDKDTDDEILVRKKSKKKEVLVDSDSDEELEMRNFADNVKGHSDNEENEETMSAYREKPRKIRSAVLDSDNSDHELDVQISTSQNAAEIPESEHDSLEKETHTVKPKTSKSLKKQTDTNKEEIVKNKSKRKIPKEKIKRRTKQKSKAVAEARPNLNDSGCLLTDGDLFDNGVENEMDSNEEEDSLEAIRAKMKSKLNSHSAENFEDFELDTEGNQESPEKRKERKAARLGKEAMKQMHSETQRLIRESSVSLPYHLPEPKTIHDFFKRRPRPLCQGNAMQLIKSTKYQPCTEEKKKPNEEICAEVPEFDYVSKEDLEISPEQPLLNTQCSHAAVLCVVQNDARTEGLSKSTEAVVTGQMNDHEDAFSDSNIVHEQETVGLITVTETFQTPFIPQPESVVCEQIQNDVVEMQRMPEQPTHKPKLSKLEKLKALGVDLSIKPRLCPDDGSFVNLDEPKPNKEFEALKERFLKHTLQKSKPRTERKVNLNIIRKETTADGKEELKADVVPIVMATEKPDKSIYQKPGEKLQVLKVKLQEAMKIRRSEERLKRQALYKLDNEDGFEDDEEEEEMTEESEDDGDGNAETADYPGGEDEEEVGDAEDDNDEDDTVNDRLLGNVPEIVIPLPRPVTTDSSLMLFKDNSSKLGDSLPDESGCKRSSRLEYEEDSLLPQLKENSHNSSFELISSMIPSYQPCNKTTRVVINSNNLGFRSPSPVHFKTSFLSSASKSSGKMSEPSLPVEDSQDLYNASPEPKASYLCAGRNSQFQFSLEDDTQSQLLDADGFLNVGRHKSSSAKHRLALDTMDENAMDANMDELLDLCSGQFKESLSGTSQAAESDAKKQPMDELLELCSGKFVSQADCSTQDSSASAKDRSTAVKKDISDEVATVSSSFLTEREQEEDEEEEFGEFKLLPCDDSESENEEQNEEEEEEEDAKDDEDEEEILQKQQKRKLRLNDFMEDEAELSGSDVGSGDEYEGDDDEYEEEAIDEDLPSDEELQDQVNKIHMKVTMDEDQRQLRFYQERYLADGDLHSDGPGRTRKFRWKHLDDASQVDMFRRDSELEEVDGENEETEETELKWRKERFEREQWLREQPQGSRDNNEEEEEDIGEDSQFMKLAKKVTAKALQRKVSTETNEPKKPGPRNPYEVIRPFSLPKLRTGSLLSKPKEVLQKLAAVSDLNPNAPRNSRNFVFQTVSPGKKEETTDKPRSKVRKNIAVAMPSPKRFKRDSTPTVKSRSIFQLLE</sequence>
<comment type="function">
    <text evidence="4 5 6 7 9 10">Required for checkpoint mediated cell cycle arrest in response to inhibition of DNA replication or to DNA damage induced by UV irradiation. Adapter protein which binds to the checkpoint kinase chek1 and facilitates the phosphorylation and activation of this kinase by the ATR-TREX1/ATRIP kinase complex. Also associates with chromatin during S-phase, and this requires the pre-replication complex (pre-RC), cdc45 and cdk2. This may indicate a role for this protein as a sensor which monitors the integrity of DNA replication forks.</text>
</comment>
<comment type="subunit">
    <text evidence="4 5 8 9">Interacts with both chek1 and plk1/plx1 when phosphorylated.</text>
</comment>
<comment type="subcellular location">
    <subcellularLocation>
        <location evidence="1">Nucleus</location>
    </subcellularLocation>
</comment>
<comment type="domain">
    <text evidence="4 5">The CHEK1-binding domain (CKBD) contains 2 potential CHEK1-binding motifs (CKB motifs). Phosphorylation sites within CKB motif 1 and CKB motif 2 are required for interaction with CHEK1.</text>
</comment>
<comment type="PTM">
    <text evidence="4 5 6 9">Phosphorylated. Phosphorylation at Ser-864, Ser-895 and Thr-906 occurs during checkpoint activation and requires the ATR kinase. Phosphorylation at Ser-864 within CKB motif 1 and Ser-895 within CKB motif 2 promotes interaction with the catalytic domain of chek1 and subsequent activation of the kinase. Phosphorylation at Thr-906 creates a binding site for the Polo-box domain of the plk1/plx1 kinase, which subsequently phosphorylates Ser-934. Phosphorylation of Ser-934 is required for chek1 inactivation during checkpoint adaptation, the process whereby a prolonged cell cycle arrest is alleviated without prior removal of the checkpoint-inducing DNA lesion. Checkpoint adaptation may promote cellular proliferation when non-lethal DNA damage cannot be repaired in a timely manner.</text>
</comment>
<comment type="similarity">
    <text evidence="11">Belongs to the claspin family.</text>
</comment>
<reference key="1">
    <citation type="journal article" date="2000" name="Mol. Cell">
        <title>Claspin, a novel protein required for the activation of Chk1 during a DNA replication checkpoint response in Xenopus egg extracts.</title>
        <authorList>
            <person name="Kumagai A."/>
            <person name="Dunphy W.G."/>
        </authorList>
    </citation>
    <scope>NUCLEOTIDE SEQUENCE [MRNA]</scope>
    <scope>IDENTIFICATION BY MASS SPECTROMETRY</scope>
    <scope>FUNCTION</scope>
    <scope>INTERACTION WITH CHEK1</scope>
    <scope>DOMAIN CKBD</scope>
    <scope>PHOSPHORYLATION</scope>
</reference>
<reference key="2">
    <citation type="submission" date="2002-05" db="EMBL/GenBank/DDBJ databases">
        <authorList>
            <person name="Kumagai A."/>
            <person name="Dunphy W.G."/>
        </authorList>
    </citation>
    <scope>SEQUENCE REVISION</scope>
</reference>
<reference key="3">
    <citation type="journal article" date="2003" name="J. Biol. Chem.">
        <title>Xenopus Drf1, a regulator of Cdc7, displays checkpoint-dependent accumulation on chromatin during an S-phase arrest.</title>
        <authorList>
            <person name="Yanow S.K."/>
            <person name="Gold D.A."/>
            <person name="Yoo H.Y."/>
            <person name="Dunphy W.G."/>
        </authorList>
    </citation>
    <scope>FUNCTION</scope>
</reference>
<reference key="4">
    <citation type="journal article" date="2003" name="J. Biol. Chem.">
        <title>Phosphorylated claspin interacts with a phosphate-binding site in the kinase domain of Chk1 during ATR-mediated activation.</title>
        <authorList>
            <person name="Jeong S.-Y."/>
            <person name="Kumagai A."/>
            <person name="Lee J."/>
            <person name="Dunphy W.G."/>
        </authorList>
    </citation>
    <scope>INTERACTION WITH CHEK1</scope>
</reference>
<reference key="5">
    <citation type="journal article" date="2003" name="Mol. Cell">
        <title>Claspin, a Chk1-regulatory protein, monitors DNA replication on chromatin independently of RPA, ATR, and Rad17.</title>
        <authorList>
            <person name="Lee J."/>
            <person name="Kumagai A."/>
            <person name="Dunphy W.G."/>
        </authorList>
    </citation>
    <scope>FUNCTION</scope>
    <scope>ASSOCIATION WITH CHROMATIN</scope>
    <scope>PHOSPHORYLATION</scope>
</reference>
<reference key="6">
    <citation type="journal article" date="2003" name="Nat. Cell Biol.">
        <title>Repeated phosphopeptide motifs in claspin mediate the regulated binding of Chk1.</title>
        <authorList>
            <person name="Kumagai A."/>
            <person name="Dunphy W.G."/>
        </authorList>
    </citation>
    <scope>FUNCTION</scope>
    <scope>INTERACTION WITH CHEK1</scope>
    <scope>DOMAIN CKBD</scope>
    <scope>PHOSPHORYLATION AT SER-864 AND SER-895</scope>
</reference>
<reference key="7">
    <citation type="journal article" date="2004" name="Cell">
        <title>Adaptation of a DNA replication checkpoint response depends upon inactivation of claspin by the Polo-like kinase.</title>
        <authorList>
            <person name="Yoo H.Y."/>
            <person name="Kumagai A."/>
            <person name="Shevchenko A."/>
            <person name="Shevchenko A."/>
            <person name="Dunphy W.G."/>
        </authorList>
    </citation>
    <scope>FUNCTION</scope>
    <scope>INTERACTION WITH PLK1</scope>
    <scope>PHOSPHORYLATION AT THR-906 AND SER-934</scope>
</reference>
<reference key="8">
    <citation type="journal article" date="2004" name="J. Biol. Chem.">
        <title>Claspin and the activated form of ATR-ATRIP collaborate in the activation of Chk1.</title>
        <authorList>
            <person name="Kumagai A."/>
            <person name="Kim S.-M."/>
            <person name="Dunphy W.G."/>
        </authorList>
    </citation>
    <scope>FUNCTION</scope>
</reference>
<accession>Q9DF50</accession>
<protein>
    <recommendedName>
        <fullName>Claspin</fullName>
    </recommendedName>
    <alternativeName>
        <fullName>xClaspin</fullName>
    </alternativeName>
</protein>
<dbReference type="EMBL" id="AF297867">
    <property type="protein sequence ID" value="AAG24516.2"/>
    <property type="molecule type" value="mRNA"/>
</dbReference>
<dbReference type="RefSeq" id="NP_001082041.1">
    <property type="nucleotide sequence ID" value="NM_001088572.1"/>
</dbReference>
<dbReference type="SMR" id="Q9DF50"/>
<dbReference type="BioGRID" id="99527">
    <property type="interactions" value="4"/>
</dbReference>
<dbReference type="iPTMnet" id="Q9DF50"/>
<dbReference type="GeneID" id="398192"/>
<dbReference type="KEGG" id="xla:398192"/>
<dbReference type="AGR" id="Xenbase:XB-GENE-6251915"/>
<dbReference type="CTD" id="398192"/>
<dbReference type="Xenbase" id="XB-GENE-6251915">
    <property type="gene designation" value="clspn.S"/>
</dbReference>
<dbReference type="OrthoDB" id="5859781at2759"/>
<dbReference type="Proteomes" id="UP000186698">
    <property type="component" value="Chromosome 2S"/>
</dbReference>
<dbReference type="Bgee" id="398192">
    <property type="expression patterns" value="Expressed in egg cell and 15 other cell types or tissues"/>
</dbReference>
<dbReference type="GO" id="GO:0005634">
    <property type="term" value="C:nucleus"/>
    <property type="evidence" value="ECO:0007669"/>
    <property type="project" value="UniProtKB-SubCell"/>
</dbReference>
<dbReference type="GO" id="GO:0010997">
    <property type="term" value="F:anaphase-promoting complex binding"/>
    <property type="evidence" value="ECO:0000318"/>
    <property type="project" value="GO_Central"/>
</dbReference>
<dbReference type="GO" id="GO:0003677">
    <property type="term" value="F:DNA binding"/>
    <property type="evidence" value="ECO:0007669"/>
    <property type="project" value="UniProtKB-KW"/>
</dbReference>
<dbReference type="GO" id="GO:0006281">
    <property type="term" value="P:DNA repair"/>
    <property type="evidence" value="ECO:0007669"/>
    <property type="project" value="UniProtKB-KW"/>
</dbReference>
<dbReference type="GO" id="GO:0033314">
    <property type="term" value="P:mitotic DNA replication checkpoint signaling"/>
    <property type="evidence" value="ECO:0000318"/>
    <property type="project" value="GO_Central"/>
</dbReference>
<dbReference type="GO" id="GO:0007095">
    <property type="term" value="P:mitotic G2 DNA damage checkpoint signaling"/>
    <property type="evidence" value="ECO:0000250"/>
    <property type="project" value="UniProtKB"/>
</dbReference>
<dbReference type="InterPro" id="IPR024146">
    <property type="entry name" value="Claspin"/>
</dbReference>
<dbReference type="PANTHER" id="PTHR14396">
    <property type="entry name" value="CLASPIN"/>
    <property type="match status" value="1"/>
</dbReference>
<dbReference type="PANTHER" id="PTHR14396:SF10">
    <property type="entry name" value="CLASPIN"/>
    <property type="match status" value="1"/>
</dbReference>
<feature type="chain" id="PRO_0000089877" description="Claspin">
    <location>
        <begin position="1"/>
        <end position="1285"/>
    </location>
</feature>
<feature type="repeat" description="CKB motif 1">
    <location>
        <begin position="858"/>
        <end position="867"/>
    </location>
</feature>
<feature type="repeat" description="CKB motif 2">
    <location>
        <begin position="889"/>
        <end position="898"/>
    </location>
</feature>
<feature type="region of interest" description="Disordered" evidence="3">
    <location>
        <begin position="67"/>
        <end position="211"/>
    </location>
</feature>
<feature type="region of interest" description="Disordered" evidence="3">
    <location>
        <begin position="240"/>
        <end position="271"/>
    </location>
</feature>
<feature type="region of interest" description="Disordered" evidence="3">
    <location>
        <begin position="600"/>
        <end position="659"/>
    </location>
</feature>
<feature type="region of interest" description="Disordered" evidence="3">
    <location>
        <begin position="770"/>
        <end position="790"/>
    </location>
</feature>
<feature type="region of interest" description="CKBD">
    <location>
        <begin position="847"/>
        <end position="903"/>
    </location>
</feature>
<feature type="region of interest" description="Interaction with PLK1" evidence="9">
    <location>
        <begin position="878"/>
        <end position="920"/>
    </location>
</feature>
<feature type="region of interest" description="Disordered" evidence="3">
    <location>
        <begin position="904"/>
        <end position="1038"/>
    </location>
</feature>
<feature type="region of interest" description="Disordered" evidence="3">
    <location>
        <begin position="1130"/>
        <end position="1192"/>
    </location>
</feature>
<feature type="region of interest" description="Disordered" evidence="3">
    <location>
        <begin position="1222"/>
        <end position="1285"/>
    </location>
</feature>
<feature type="coiled-coil region" evidence="2">
    <location>
        <begin position="222"/>
        <end position="248"/>
    </location>
</feature>
<feature type="coiled-coil region" evidence="2">
    <location>
        <begin position="957"/>
        <end position="995"/>
    </location>
</feature>
<feature type="compositionally biased region" description="Basic and acidic residues" evidence="3">
    <location>
        <begin position="76"/>
        <end position="90"/>
    </location>
</feature>
<feature type="compositionally biased region" description="Basic and acidic residues" evidence="3">
    <location>
        <begin position="136"/>
        <end position="148"/>
    </location>
</feature>
<feature type="compositionally biased region" description="Basic residues" evidence="3">
    <location>
        <begin position="149"/>
        <end position="158"/>
    </location>
</feature>
<feature type="compositionally biased region" description="Basic and acidic residues" evidence="3">
    <location>
        <begin position="159"/>
        <end position="170"/>
    </location>
</feature>
<feature type="compositionally biased region" description="Basic residues" evidence="3">
    <location>
        <begin position="171"/>
        <end position="190"/>
    </location>
</feature>
<feature type="compositionally biased region" description="Acidic residues" evidence="3">
    <location>
        <begin position="248"/>
        <end position="258"/>
    </location>
</feature>
<feature type="compositionally biased region" description="Acidic residues" evidence="3">
    <location>
        <begin position="603"/>
        <end position="625"/>
    </location>
</feature>
<feature type="compositionally biased region" description="Acidic residues" evidence="3">
    <location>
        <begin position="634"/>
        <end position="653"/>
    </location>
</feature>
<feature type="compositionally biased region" description="Low complexity" evidence="3">
    <location>
        <begin position="770"/>
        <end position="780"/>
    </location>
</feature>
<feature type="compositionally biased region" description="Basic and acidic residues" evidence="3">
    <location>
        <begin position="913"/>
        <end position="925"/>
    </location>
</feature>
<feature type="compositionally biased region" description="Acidic residues" evidence="3">
    <location>
        <begin position="940"/>
        <end position="949"/>
    </location>
</feature>
<feature type="compositionally biased region" description="Acidic residues" evidence="3">
    <location>
        <begin position="958"/>
        <end position="985"/>
    </location>
</feature>
<feature type="compositionally biased region" description="Acidic residues" evidence="3">
    <location>
        <begin position="1014"/>
        <end position="1038"/>
    </location>
</feature>
<feature type="compositionally biased region" description="Acidic residues" evidence="3">
    <location>
        <begin position="1143"/>
        <end position="1152"/>
    </location>
</feature>
<feature type="compositionally biased region" description="Polar residues" evidence="3">
    <location>
        <begin position="1222"/>
        <end position="1238"/>
    </location>
</feature>
<feature type="compositionally biased region" description="Basic and acidic residues" evidence="3">
    <location>
        <begin position="1240"/>
        <end position="1250"/>
    </location>
</feature>
<feature type="compositionally biased region" description="Polar residues" evidence="3">
    <location>
        <begin position="1272"/>
        <end position="1285"/>
    </location>
</feature>
<feature type="modified residue" description="Phosphoserine" evidence="5">
    <location>
        <position position="864"/>
    </location>
</feature>
<feature type="modified residue" description="Phosphoserine" evidence="5">
    <location>
        <position position="895"/>
    </location>
</feature>
<feature type="modified residue" description="Phosphothreonine" evidence="9">
    <location>
        <position position="906"/>
    </location>
</feature>
<feature type="modified residue" description="Phosphoserine; by PLK1" evidence="9">
    <location>
        <position position="934"/>
    </location>
</feature>
<keyword id="KW-0131">Cell cycle</keyword>
<keyword id="KW-0175">Coiled coil</keyword>
<keyword id="KW-0227">DNA damage</keyword>
<keyword id="KW-0234">DNA repair</keyword>
<keyword id="KW-0238">DNA-binding</keyword>
<keyword id="KW-0539">Nucleus</keyword>
<keyword id="KW-0597">Phosphoprotein</keyword>
<keyword id="KW-1185">Reference proteome</keyword>
<keyword id="KW-0677">Repeat</keyword>
<evidence type="ECO:0000250" key="1">
    <source>
        <dbReference type="UniProtKB" id="Q9HAW4"/>
    </source>
</evidence>
<evidence type="ECO:0000255" key="2"/>
<evidence type="ECO:0000256" key="3">
    <source>
        <dbReference type="SAM" id="MobiDB-lite"/>
    </source>
</evidence>
<evidence type="ECO:0000269" key="4">
    <source>
    </source>
</evidence>
<evidence type="ECO:0000269" key="5">
    <source>
    </source>
</evidence>
<evidence type="ECO:0000269" key="6">
    <source>
    </source>
</evidence>
<evidence type="ECO:0000269" key="7">
    <source>
    </source>
</evidence>
<evidence type="ECO:0000269" key="8">
    <source>
    </source>
</evidence>
<evidence type="ECO:0000269" key="9">
    <source>
    </source>
</evidence>
<evidence type="ECO:0000269" key="10">
    <source>
    </source>
</evidence>
<evidence type="ECO:0000305" key="11"/>
<proteinExistence type="evidence at protein level"/>
<name>CLSPN_XENLA</name>
<organism>
    <name type="scientific">Xenopus laevis</name>
    <name type="common">African clawed frog</name>
    <dbReference type="NCBI Taxonomy" id="8355"/>
    <lineage>
        <taxon>Eukaryota</taxon>
        <taxon>Metazoa</taxon>
        <taxon>Chordata</taxon>
        <taxon>Craniata</taxon>
        <taxon>Vertebrata</taxon>
        <taxon>Euteleostomi</taxon>
        <taxon>Amphibia</taxon>
        <taxon>Batrachia</taxon>
        <taxon>Anura</taxon>
        <taxon>Pipoidea</taxon>
        <taxon>Pipidae</taxon>
        <taxon>Xenopodinae</taxon>
        <taxon>Xenopus</taxon>
        <taxon>Xenopus</taxon>
    </lineage>
</organism>
<gene>
    <name type="primary">clspn</name>
</gene>